<sequence length="217" mass="25079">MATVEPETTPTPNPPPTEEEKTESNQEVANPEHYIKHPLQNRWALWFFKNDKSKTWQANLRLISKFDTVEDFWALYNHIQLSSNLMPGCDYSLFKDGIEPMWEDEKNKRGGRWLITLNKQQRRSDLDRFWLETVLCLIGESFDDYSDDVCGAVVNVRAKGDKIAIWTTECENREAVTHIGRVYKERLGLPPKIVIGYQSHADTATKSGSTTKNRFVV</sequence>
<comment type="function">
    <text evidence="1 2 3">Acts in the cytoplasm to initiate and regulate protein synthesis and is required in the nucleus for export of a subset of mRNAs from the nucleus to the cytoplasm which promotes processes such as RNA capping, processing and splicing (By similarity). Component of the protein complex eIF4F, which is involved in the recognition of the mRNA cap, ATP-dependent unwinding of 5'-terminal secondary structure and recruitment of mRNA to the ribosome (By similarity). This protein recognizes and binds the 7-methylguanosine (m7G)-containing mRNA cap during an early step in the initiation of protein synthesis and facilitates ribosome binding by inducing the unwinding of the mRNAs secondary structures (By similarity). Together with EIF4G1, antagonizes the scanning promoted by EIF1-EIF4G1 and is required for TISU translation, a process where the TISU element recognition makes scanning unnecessary (By similarity). In addition to its role in translation initiation, also acts as a regulator of translation and stability in the cytoplasm. Component of the CYFIP1-EIF4E-FMR1 complex which binds to the mRNA cap and mediates translational repression: in the complex, EIF4E mediates the binding to the mRNA cap. Component of a multiprotein complex that sequesters and represses translation of proneurogenic factors during neurogenesis (By similarity). In P-bodies, component of a complex that mediates the storage of translationally inactive mRNAs in the cytoplasm and prevents their degradation (By similarity). May play an important role in spermatogenesis through translational regulation of stage-specific mRNAs during germ cell development (By similarity). As well as its roles in translation, also involved in mRNA nucleocytoplasmic transport (By similarity). Its role in mRNA export from the nucleus to the cytoplasm relies on its ability to bind the m7G cap of RNAs and on the presence of the 50-nucleotide EIF4E sensitivity element (4ESE) in the 3'UTR of sensitive transcripts (By similarity). Interaction with the 4ESE is mediated by LRPPRC which binds simultaneously to both EIF4E and the 4ESE, thereby acting as a platform for assembly for the RNA export complex (By similarity). EIF4E-dependent mRNA export is independent of ongoing protein or RNA synthesis and is also NFX1-independent but is XPO1-dependent with LRPPRC interacting with XPO1 to form an EIF4E-dependent mRNA export complex (By similarity). Alters the composition of the cytoplasmic face of the nuclear pore to promote RNA export by reducing RANBP2 expression, relocalizing nucleoporin NUP214 and increasing expression of RANBP1 and RNA export factors DDX19 and GLE1. Promotes the nuclear export of cyclin CCND1 mRNA (By similarity). Promotes the nuclear export of NOS2/iNOS mRNA (By similarity). Promotes the nuclear export of MDM2 mRNA (By similarity). Also promotes the export of additional mRNAs, including others involved in the cell cycle (By similarity). In the nucleus, binds to capped splice factor-encoding mRNAs and stimulates their nuclear export to enhance splice factor production by increasing their cytoplasmic availability to the translation machinery (By similarity). May also regulate splicing through interaction with the spliceosome in an RNA and m7G cap-dependent manner (By similarity). Also binds to some pre-mRNAs and may play a role in their recruitment to the spliceosome (By similarity). Promotes steady-state capping of a subset of coding and non-coding RNAs by mediating nuclear export of capping machinery mRNAs including RNMT, RNGTT and RAMAC to enhance their translation (By similarity). Stimulates mRNA 3'-end processing by promoting the expression of several core cleavage complex factors required for mRNA cleavage and polyadenylation, and may also have a direct effect through its interaction with the CPSF3 cleavage enzyme (By similarity). Rescues cells from apoptosis by promoting activation of serine/threonine-protein kinase AKT1 through mRNA export of NBS1 which potentiates AKT1 phosphorylation and also through mRNA export of AKT1 effectors, allowing for increased production of these proteins (By similarity).</text>
</comment>
<comment type="subunit">
    <text evidence="1 2">eIF4F is a multi-subunit complex, the composition of which varies with external and internal environmental conditions. It is composed of at least EIF4A, EIF4E and EIF4G1/EIF4G3. EIF4E is also known to interact with other partners. Interacts with EIF4ENIF1/4E-T; promotes recruitment to P-bodies and import into the nucleus. Hypophosphorylated EIF4EBP1, EIF4EBP2 and EIF4EBP3 compete with EIF4G1/EIF4G3 to interact with EIF4E; insulin stimulated MAP-kinase (MAPK1 and MAPK3) phosphorylation of EIF4EBP1 causes dissociation of the complex allowing EIF4G1/EIF4G3 to bind and consequent initiation of translation. Interacts mutually exclusive with EIF4A1 or EIF4A2 (By similarity). Interacts with NGDN and PIWIL2. Component of the CYFIP1-EIF4E-FMR1 complex composed of CYFIP, EIF4E and FMR1. Interacts directly with CYFIP1. Interacts with CLOCK (By similarity). Binds to MKNK2 in nucleus. Interacts with LIMD1, WTIP and AJUBA. Interacts with APOBEC3G in an RNA-dependent manner. Interacts with LARP1. Interacts with METTL3. Interacts with RBM24; this interaction prevents EIF4E from binding to p53/TP53 mRNA and inhibits the assembly of translation initiation complex. Interacts with DDX3X; interaction is direct and in an RNA-independent manner; this interaction enhances EIF4E cap-binding ability and is required for the repression of cap-dependent translation and the increase of IRES-mediated translation. DDX3X competes with EIF4G1 for interaction with EIF4E (By similarity). Interacts with EIF4G1; which in a mutual exclusive interaction associates either with EIF1 or with EIF4E on a common binding site (By similarity). Interacts with BTG4 and CNOT7 (By similarity). Interacts with LRPPRC (via N-terminus); the interaction promotes association of EIF4E with 4ESE-containing mRNAs (By similarity). Interacts with mRNA cleavage enzyme CPSF3 and its cofactor CPSF1 (By similarity). Interacts (via RING-type zinc finger) with PML; the interaction results in conformational changes of both interacting proteins and reduces EIF4E affinity for the 5' m7G cap of mRNA, thus reducing EIF4E-mediated mRNA nuclear export (By similarity). Interacts with homeobox protein HHEX/PRH; the interaction inhibits EIF4E-mediated mRNA nuclear export (By similarity). Interacts with homeobox protein HOXA9; the interaction positively regulates EIF4E-mediated mRNA nuclear export (By similarity). Interacts with homeobox protein EMX2 (By similarity).</text>
</comment>
<comment type="subcellular location">
    <subcellularLocation>
        <location evidence="1">Cytoplasm</location>
        <location evidence="1">P-body</location>
    </subcellularLocation>
    <subcellularLocation>
        <location evidence="1">Cytoplasm</location>
    </subcellularLocation>
    <subcellularLocation>
        <location evidence="1">Cytoplasm</location>
        <location evidence="1">Stress granule</location>
    </subcellularLocation>
    <subcellularLocation>
        <location evidence="1">Nucleus</location>
    </subcellularLocation>
    <subcellularLocation>
        <location evidence="1">Nucleus speckle</location>
    </subcellularLocation>
    <subcellularLocation>
        <location evidence="2">Nucleus</location>
        <location evidence="2">Nuclear body</location>
    </subcellularLocation>
    <text evidence="1 2">Interaction with EIF4ENIF1/4E-T is required for localization to processing bodies (P-bodies). Imported in the nucleus via interaction with EIF4ENIF1/4E-T via a piggy-back mechanism (By similarity). Sequestered in the nucleus by EIF4EBP1 and EIF4EBP2 (By similarity).</text>
</comment>
<comment type="PTM">
    <text evidence="1 2">Phosphorylation increases the ability of the protein to bind to mRNA caps and to form the eIF4F complex (By similarity). Phosphorylation also enhances its mRNA transport function (By similarity). Phosphorylation at Ser-209 is not essential for protein synthesis (By similarity).</text>
</comment>
<comment type="similarity">
    <text evidence="5">Belongs to the eukaryotic initiation factor 4E family.</text>
</comment>
<accession>Q9N0T5</accession>
<accession>Q2NL02</accession>
<organism>
    <name type="scientific">Bos taurus</name>
    <name type="common">Bovine</name>
    <dbReference type="NCBI Taxonomy" id="9913"/>
    <lineage>
        <taxon>Eukaryota</taxon>
        <taxon>Metazoa</taxon>
        <taxon>Chordata</taxon>
        <taxon>Craniata</taxon>
        <taxon>Vertebrata</taxon>
        <taxon>Euteleostomi</taxon>
        <taxon>Mammalia</taxon>
        <taxon>Eutheria</taxon>
        <taxon>Laurasiatheria</taxon>
        <taxon>Artiodactyla</taxon>
        <taxon>Ruminantia</taxon>
        <taxon>Pecora</taxon>
        <taxon>Bovidae</taxon>
        <taxon>Bovinae</taxon>
        <taxon>Bos</taxon>
    </lineage>
</organism>
<feature type="initiator methionine" description="Removed" evidence="1">
    <location>
        <position position="1"/>
    </location>
</feature>
<feature type="chain" id="PRO_0000193633" description="Eukaryotic translation initiation factor 4E">
    <location>
        <begin position="2"/>
        <end position="217"/>
    </location>
</feature>
<feature type="region of interest" description="Disordered" evidence="4">
    <location>
        <begin position="1"/>
        <end position="27"/>
    </location>
</feature>
<feature type="region of interest" description="EIF4EBP1/2/3 binding" evidence="1">
    <location>
        <begin position="37"/>
        <end position="40"/>
    </location>
</feature>
<feature type="region of interest" description="EIF4EBP1/2/3 binding" evidence="1">
    <location>
        <begin position="73"/>
        <end position="77"/>
    </location>
</feature>
<feature type="region of interest" description="EIF4EBP1/2/3 binding" evidence="1">
    <location>
        <begin position="132"/>
        <end position="139"/>
    </location>
</feature>
<feature type="binding site" evidence="1">
    <location>
        <begin position="56"/>
        <end position="57"/>
    </location>
    <ligand>
        <name>mRNA</name>
        <dbReference type="ChEBI" id="CHEBI:33699"/>
    </ligand>
    <ligandPart>
        <name>N(7)-methylguanosine 5'-triphosphate group</name>
        <dbReference type="ChEBI" id="CHEBI:74429"/>
        <note>m7GTP residue in mRNA cap</note>
    </ligandPart>
</feature>
<feature type="binding site" evidence="1">
    <location>
        <begin position="102"/>
        <end position="103"/>
    </location>
    <ligand>
        <name>mRNA</name>
        <dbReference type="ChEBI" id="CHEBI:33699"/>
    </ligand>
    <ligandPart>
        <name>N(7)-methylguanosine 5'-triphosphate group</name>
        <dbReference type="ChEBI" id="CHEBI:74429"/>
        <note>m7GTP residue in mRNA cap</note>
    </ligandPart>
</feature>
<feature type="binding site" evidence="1">
    <location>
        <begin position="157"/>
        <end position="162"/>
    </location>
    <ligand>
        <name>mRNA</name>
        <dbReference type="ChEBI" id="CHEBI:33699"/>
    </ligand>
    <ligandPart>
        <name>N(7)-methylguanosine 5'-triphosphate group</name>
        <dbReference type="ChEBI" id="CHEBI:74429"/>
        <note>m7GTP residue in mRNA cap</note>
    </ligandPart>
</feature>
<feature type="binding site" evidence="1">
    <location>
        <begin position="205"/>
        <end position="207"/>
    </location>
    <ligand>
        <name>mRNA</name>
        <dbReference type="ChEBI" id="CHEBI:33699"/>
    </ligand>
    <ligandPart>
        <name>N(7)-methylguanosine 5'-triphosphate group</name>
        <dbReference type="ChEBI" id="CHEBI:74429"/>
        <note>m7GTP residue in mRNA cap</note>
    </ligandPart>
</feature>
<feature type="modified residue" description="N-acetylalanine" evidence="1">
    <location>
        <position position="2"/>
    </location>
</feature>
<feature type="modified residue" description="Phosphothreonine" evidence="1">
    <location>
        <position position="22"/>
    </location>
</feature>
<feature type="modified residue" description="Phosphoserine; by PKC and MKNK2" evidence="1">
    <location>
        <position position="209"/>
    </location>
</feature>
<feature type="sequence conflict" description="In Ref. 1; AAF66991." evidence="5" ref="1">
    <original>S</original>
    <variation>G</variation>
    <location>
        <position position="124"/>
    </location>
</feature>
<feature type="sequence conflict" description="In Ref. 1; AAF66991." evidence="5" ref="1">
    <original>V</original>
    <variation>L</variation>
    <location>
        <position position="134"/>
    </location>
</feature>
<keyword id="KW-0007">Acetylation</keyword>
<keyword id="KW-0963">Cytoplasm</keyword>
<keyword id="KW-0396">Initiation factor</keyword>
<keyword id="KW-0509">mRNA transport</keyword>
<keyword id="KW-0539">Nucleus</keyword>
<keyword id="KW-0597">Phosphoprotein</keyword>
<keyword id="KW-0648">Protein biosynthesis</keyword>
<keyword id="KW-1185">Reference proteome</keyword>
<keyword id="KW-0694">RNA-binding</keyword>
<keyword id="KW-0810">Translation regulation</keyword>
<keyword id="KW-0813">Transport</keyword>
<name>IF4E_BOVIN</name>
<protein>
    <recommendedName>
        <fullName>Eukaryotic translation initiation factor 4E</fullName>
        <shortName>eIF-4E</shortName>
        <shortName>eIF4E</shortName>
    </recommendedName>
    <alternativeName>
        <fullName>mRNA cap-binding protein</fullName>
    </alternativeName>
</protein>
<evidence type="ECO:0000250" key="1">
    <source>
        <dbReference type="UniProtKB" id="P06730"/>
    </source>
</evidence>
<evidence type="ECO:0000250" key="2">
    <source>
        <dbReference type="UniProtKB" id="P63073"/>
    </source>
</evidence>
<evidence type="ECO:0000250" key="3">
    <source>
        <dbReference type="UniProtKB" id="P63074"/>
    </source>
</evidence>
<evidence type="ECO:0000256" key="4">
    <source>
        <dbReference type="SAM" id="MobiDB-lite"/>
    </source>
</evidence>
<evidence type="ECO:0000305" key="5"/>
<dbReference type="EMBL" id="AF257235">
    <property type="protein sequence ID" value="AAF66991.1"/>
    <property type="molecule type" value="mRNA"/>
</dbReference>
<dbReference type="EMBL" id="BC111272">
    <property type="protein sequence ID" value="AAI11273.1"/>
    <property type="molecule type" value="mRNA"/>
</dbReference>
<dbReference type="RefSeq" id="NP_776735.2">
    <property type="nucleotide sequence ID" value="NM_174310.3"/>
</dbReference>
<dbReference type="BMRB" id="Q9N0T5"/>
<dbReference type="SMR" id="Q9N0T5"/>
<dbReference type="FunCoup" id="Q9N0T5">
    <property type="interactions" value="3441"/>
</dbReference>
<dbReference type="STRING" id="9913.ENSBTAP00000070030"/>
<dbReference type="iPTMnet" id="Q9N0T5"/>
<dbReference type="PaxDb" id="9913-ENSBTAP00000012530"/>
<dbReference type="GeneID" id="281751"/>
<dbReference type="KEGG" id="bta:281751"/>
<dbReference type="CTD" id="1977"/>
<dbReference type="eggNOG" id="KOG1670">
    <property type="taxonomic scope" value="Eukaryota"/>
</dbReference>
<dbReference type="HOGENOM" id="CLU_043552_1_1_1"/>
<dbReference type="InParanoid" id="Q9N0T5"/>
<dbReference type="OrthoDB" id="590761at2759"/>
<dbReference type="TreeFam" id="TF101526"/>
<dbReference type="Proteomes" id="UP000009136">
    <property type="component" value="Unplaced"/>
</dbReference>
<dbReference type="GO" id="GO:0005737">
    <property type="term" value="C:cytoplasm"/>
    <property type="evidence" value="ECO:0000250"/>
    <property type="project" value="AgBase"/>
</dbReference>
<dbReference type="GO" id="GO:0010494">
    <property type="term" value="C:cytoplasmic stress granule"/>
    <property type="evidence" value="ECO:0000250"/>
    <property type="project" value="UniProtKB"/>
</dbReference>
<dbReference type="GO" id="GO:0005829">
    <property type="term" value="C:cytosol"/>
    <property type="evidence" value="ECO:0000250"/>
    <property type="project" value="UniProtKB"/>
</dbReference>
<dbReference type="GO" id="GO:0016281">
    <property type="term" value="C:eukaryotic translation initiation factor 4F complex"/>
    <property type="evidence" value="ECO:0000250"/>
    <property type="project" value="UniProtKB"/>
</dbReference>
<dbReference type="GO" id="GO:0016604">
    <property type="term" value="C:nuclear body"/>
    <property type="evidence" value="ECO:0000250"/>
    <property type="project" value="UniProtKB"/>
</dbReference>
<dbReference type="GO" id="GO:0016607">
    <property type="term" value="C:nuclear speck"/>
    <property type="evidence" value="ECO:0000250"/>
    <property type="project" value="UniProtKB"/>
</dbReference>
<dbReference type="GO" id="GO:0005634">
    <property type="term" value="C:nucleus"/>
    <property type="evidence" value="ECO:0000250"/>
    <property type="project" value="UniProtKB"/>
</dbReference>
<dbReference type="GO" id="GO:0000932">
    <property type="term" value="C:P-body"/>
    <property type="evidence" value="ECO:0000250"/>
    <property type="project" value="UniProtKB"/>
</dbReference>
<dbReference type="GO" id="GO:0048471">
    <property type="term" value="C:perinuclear region of cytoplasm"/>
    <property type="evidence" value="ECO:0000250"/>
    <property type="project" value="AgBase"/>
</dbReference>
<dbReference type="GO" id="GO:0140297">
    <property type="term" value="F:DNA-binding transcription factor binding"/>
    <property type="evidence" value="ECO:0000250"/>
    <property type="project" value="AgBase"/>
</dbReference>
<dbReference type="GO" id="GO:0019899">
    <property type="term" value="F:enzyme binding"/>
    <property type="evidence" value="ECO:0000250"/>
    <property type="project" value="AgBase"/>
</dbReference>
<dbReference type="GO" id="GO:0031370">
    <property type="term" value="F:eukaryotic initiation factor 4G binding"/>
    <property type="evidence" value="ECO:0000250"/>
    <property type="project" value="AgBase"/>
</dbReference>
<dbReference type="GO" id="GO:0098808">
    <property type="term" value="F:mRNA cap binding"/>
    <property type="evidence" value="ECO:0000250"/>
    <property type="project" value="UniProtKB"/>
</dbReference>
<dbReference type="GO" id="GO:0000340">
    <property type="term" value="F:RNA 7-methylguanosine cap binding"/>
    <property type="evidence" value="ECO:0000250"/>
    <property type="project" value="UniProtKB"/>
</dbReference>
<dbReference type="GO" id="GO:0003743">
    <property type="term" value="F:translation initiation factor activity"/>
    <property type="evidence" value="ECO:0000250"/>
    <property type="project" value="UniProtKB"/>
</dbReference>
<dbReference type="GO" id="GO:0006406">
    <property type="term" value="P:mRNA export from nucleus"/>
    <property type="evidence" value="ECO:0000250"/>
    <property type="project" value="UniProtKB"/>
</dbReference>
<dbReference type="GO" id="GO:0006417">
    <property type="term" value="P:regulation of translation"/>
    <property type="evidence" value="ECO:0000250"/>
    <property type="project" value="UniProtKB"/>
</dbReference>
<dbReference type="GO" id="GO:0006413">
    <property type="term" value="P:translational initiation"/>
    <property type="evidence" value="ECO:0000250"/>
    <property type="project" value="UniProtKB"/>
</dbReference>
<dbReference type="FunFam" id="3.30.760.10:FF:000002">
    <property type="entry name" value="Eukaryotic translation initiation factor 4E"/>
    <property type="match status" value="1"/>
</dbReference>
<dbReference type="Gene3D" id="3.30.760.10">
    <property type="entry name" value="RNA Cap, Translation Initiation Factor Eif4e"/>
    <property type="match status" value="1"/>
</dbReference>
<dbReference type="InterPro" id="IPR023398">
    <property type="entry name" value="TIF_eIF4e-like"/>
</dbReference>
<dbReference type="InterPro" id="IPR001040">
    <property type="entry name" value="TIF_eIF_4E"/>
</dbReference>
<dbReference type="InterPro" id="IPR019770">
    <property type="entry name" value="TIF_eIF_4E_CS"/>
</dbReference>
<dbReference type="PANTHER" id="PTHR11960:SF14">
    <property type="entry name" value="EUKARYOTIC TRANSLATION INITIATION FACTOR 4E"/>
    <property type="match status" value="1"/>
</dbReference>
<dbReference type="PANTHER" id="PTHR11960">
    <property type="entry name" value="EUKARYOTIC TRANSLATION INITIATION FACTOR 4E RELATED"/>
    <property type="match status" value="1"/>
</dbReference>
<dbReference type="Pfam" id="PF01652">
    <property type="entry name" value="IF4E"/>
    <property type="match status" value="1"/>
</dbReference>
<dbReference type="SUPFAM" id="SSF55418">
    <property type="entry name" value="eIF4e-like"/>
    <property type="match status" value="1"/>
</dbReference>
<dbReference type="PROSITE" id="PS00813">
    <property type="entry name" value="IF4E"/>
    <property type="match status" value="1"/>
</dbReference>
<gene>
    <name type="primary">EIF4E</name>
</gene>
<reference key="1">
    <citation type="journal article" date="2001" name="DNA Seq.">
        <title>Cloning of bovine eukaryotic translation initiation factor 4E (eIF-4E) and its expression in the bovine mammary gland at different physiological stages.</title>
        <authorList>
            <person name="Long E."/>
            <person name="Capuco A.V."/>
            <person name="Zhao X."/>
        </authorList>
    </citation>
    <scope>NUCLEOTIDE SEQUENCE [MRNA]</scope>
</reference>
<reference key="2">
    <citation type="submission" date="2005-12" db="EMBL/GenBank/DDBJ databases">
        <authorList>
            <consortium name="NIH - Mammalian Gene Collection (MGC) project"/>
        </authorList>
    </citation>
    <scope>NUCLEOTIDE SEQUENCE [LARGE SCALE MRNA]</scope>
    <source>
        <strain>Crossbred X Angus</strain>
        <tissue>Liver</tissue>
    </source>
</reference>
<proteinExistence type="evidence at transcript level"/>